<feature type="chain" id="PRO_0000067664" description="Urease accessory protein UreG">
    <location>
        <begin position="1"/>
        <end position="205"/>
    </location>
</feature>
<feature type="binding site" evidence="1">
    <location>
        <begin position="14"/>
        <end position="21"/>
    </location>
    <ligand>
        <name>GTP</name>
        <dbReference type="ChEBI" id="CHEBI:37565"/>
    </ligand>
</feature>
<accession>Q03287</accession>
<dbReference type="EMBL" id="L03308">
    <property type="protein sequence ID" value="AAA24749.1"/>
    <property type="molecule type" value="Genomic_DNA"/>
</dbReference>
<dbReference type="SMR" id="Q03287"/>
<dbReference type="GO" id="GO:0005737">
    <property type="term" value="C:cytoplasm"/>
    <property type="evidence" value="ECO:0007669"/>
    <property type="project" value="UniProtKB-SubCell"/>
</dbReference>
<dbReference type="GO" id="GO:0005525">
    <property type="term" value="F:GTP binding"/>
    <property type="evidence" value="ECO:0007669"/>
    <property type="project" value="UniProtKB-KW"/>
</dbReference>
<dbReference type="GO" id="GO:0003924">
    <property type="term" value="F:GTPase activity"/>
    <property type="evidence" value="ECO:0007669"/>
    <property type="project" value="InterPro"/>
</dbReference>
<dbReference type="GO" id="GO:0016151">
    <property type="term" value="F:nickel cation binding"/>
    <property type="evidence" value="ECO:0007669"/>
    <property type="project" value="UniProtKB-UniRule"/>
</dbReference>
<dbReference type="GO" id="GO:0043419">
    <property type="term" value="P:urea catabolic process"/>
    <property type="evidence" value="ECO:0007669"/>
    <property type="project" value="InterPro"/>
</dbReference>
<dbReference type="CDD" id="cd05540">
    <property type="entry name" value="UreG"/>
    <property type="match status" value="1"/>
</dbReference>
<dbReference type="FunFam" id="3.40.50.300:FF:000208">
    <property type="entry name" value="Urease accessory protein UreG"/>
    <property type="match status" value="1"/>
</dbReference>
<dbReference type="Gene3D" id="3.40.50.300">
    <property type="entry name" value="P-loop containing nucleotide triphosphate hydrolases"/>
    <property type="match status" value="1"/>
</dbReference>
<dbReference type="HAMAP" id="MF_01389">
    <property type="entry name" value="UreG"/>
    <property type="match status" value="1"/>
</dbReference>
<dbReference type="InterPro" id="IPR003495">
    <property type="entry name" value="CobW/HypB/UreG_nucleotide-bd"/>
</dbReference>
<dbReference type="InterPro" id="IPR027417">
    <property type="entry name" value="P-loop_NTPase"/>
</dbReference>
<dbReference type="InterPro" id="IPR004400">
    <property type="entry name" value="UreG"/>
</dbReference>
<dbReference type="NCBIfam" id="TIGR00101">
    <property type="entry name" value="ureG"/>
    <property type="match status" value="1"/>
</dbReference>
<dbReference type="PANTHER" id="PTHR31715">
    <property type="entry name" value="UREASE ACCESSORY PROTEIN G"/>
    <property type="match status" value="1"/>
</dbReference>
<dbReference type="PANTHER" id="PTHR31715:SF0">
    <property type="entry name" value="UREASE ACCESSORY PROTEIN G"/>
    <property type="match status" value="1"/>
</dbReference>
<dbReference type="Pfam" id="PF02492">
    <property type="entry name" value="cobW"/>
    <property type="match status" value="1"/>
</dbReference>
<dbReference type="PIRSF" id="PIRSF005624">
    <property type="entry name" value="Ni-bind_GTPase"/>
    <property type="match status" value="1"/>
</dbReference>
<dbReference type="SUPFAM" id="SSF52540">
    <property type="entry name" value="P-loop containing nucleoside triphosphate hydrolases"/>
    <property type="match status" value="1"/>
</dbReference>
<geneLocation type="plasmid"/>
<name>UREG_ECOLX</name>
<keyword id="KW-0143">Chaperone</keyword>
<keyword id="KW-0963">Cytoplasm</keyword>
<keyword id="KW-0342">GTP-binding</keyword>
<keyword id="KW-0996">Nickel insertion</keyword>
<keyword id="KW-0547">Nucleotide-binding</keyword>
<keyword id="KW-0614">Plasmid</keyword>
<sequence>MQEYNQPLRIGVGGPVGSGKTALLEVLCKAMRDTYQIAVVTNDIYTQEDAKILTRAEALDADRIIGVETGGCPHTAIREDASMNLAAVEELAIRHKNLDIVFVESGGDNLSATFSPELADLTIYVIDVAEGEKIPRKGGPGITHSDLLVINKIDLAPYVGASLEVMEADTARMRPVKPYVFTNLKKKVGLETIIEFIIDKGMLGR</sequence>
<reference key="1">
    <citation type="journal article" date="1993" name="J. Bacteriol.">
        <title>Characterization of a plasmid-encoded urease gene cluster found in members of the family Enterobacteriaceae.</title>
        <authorList>
            <person name="D'Orazio S.E."/>
            <person name="Collins C.M."/>
        </authorList>
    </citation>
    <scope>NUCLEOTIDE SEQUENCE [GENOMIC DNA]</scope>
    <scope>INDUCTION</scope>
    <source>
        <strain>1440 / UPEC</strain>
    </source>
</reference>
<organism>
    <name type="scientific">Escherichia coli</name>
    <dbReference type="NCBI Taxonomy" id="562"/>
    <lineage>
        <taxon>Bacteria</taxon>
        <taxon>Pseudomonadati</taxon>
        <taxon>Pseudomonadota</taxon>
        <taxon>Gammaproteobacteria</taxon>
        <taxon>Enterobacterales</taxon>
        <taxon>Enterobacteriaceae</taxon>
        <taxon>Escherichia</taxon>
    </lineage>
</organism>
<protein>
    <recommendedName>
        <fullName evidence="1">Urease accessory protein UreG</fullName>
    </recommendedName>
</protein>
<proteinExistence type="evidence at transcript level"/>
<evidence type="ECO:0000255" key="1">
    <source>
        <dbReference type="HAMAP-Rule" id="MF_01389"/>
    </source>
</evidence>
<evidence type="ECO:0000269" key="2">
    <source>
    </source>
</evidence>
<gene>
    <name evidence="1" type="primary">ureG</name>
</gene>
<comment type="function">
    <text evidence="1">Facilitates the functional incorporation of the urease nickel metallocenter. This process requires GTP hydrolysis, probably effectuated by UreG.</text>
</comment>
<comment type="subunit">
    <text evidence="1">Homodimer. UreD, UreF and UreG form a complex that acts as a GTP-hydrolysis-dependent molecular chaperone, activating the urease apoprotein by helping to assemble the nickel containing metallocenter of UreC. The UreE protein probably delivers the nickel.</text>
</comment>
<comment type="subcellular location">
    <subcellularLocation>
        <location evidence="1">Cytoplasm</location>
    </subcellularLocation>
</comment>
<comment type="induction">
    <text evidence="2">The probable operon is induced by urea.</text>
</comment>
<comment type="similarity">
    <text evidence="1">Belongs to the SIMIBI class G3E GTPase family. UreG subfamily.</text>
</comment>